<protein>
    <recommendedName>
        <fullName evidence="1">RecBCD enzyme subunit RecB</fullName>
        <ecNumber evidence="1">3.1.11.5</ecNumber>
        <ecNumber evidence="1">5.6.2.4</ecNumber>
    </recommendedName>
    <alternativeName>
        <fullName evidence="1">DNA 3'-5' helicase subunit RecB</fullName>
    </alternativeName>
    <alternativeName>
        <fullName evidence="1">Exonuclease V subunit RecB</fullName>
        <shortName evidence="1">ExoV subunit RecB</shortName>
    </alternativeName>
    <alternativeName>
        <fullName evidence="1">Helicase/nuclease RecBCD subunit RecB</fullName>
    </alternativeName>
</protein>
<evidence type="ECO:0000255" key="1">
    <source>
        <dbReference type="HAMAP-Rule" id="MF_01485"/>
    </source>
</evidence>
<evidence type="ECO:0000305" key="2"/>
<reference key="1">
    <citation type="journal article" date="1999" name="Nat. Genet.">
        <title>Comparative genomes of Chlamydia pneumoniae and C. trachomatis.</title>
        <authorList>
            <person name="Kalman S."/>
            <person name="Mitchell W.P."/>
            <person name="Marathe R."/>
            <person name="Lammel C.J."/>
            <person name="Fan J."/>
            <person name="Hyman R.W."/>
            <person name="Olinger L."/>
            <person name="Grimwood J."/>
            <person name="Davis R.W."/>
            <person name="Stephens R.S."/>
        </authorList>
    </citation>
    <scope>NUCLEOTIDE SEQUENCE [LARGE SCALE GENOMIC DNA]</scope>
    <source>
        <strain>CWL029</strain>
    </source>
</reference>
<reference key="2">
    <citation type="journal article" date="2000" name="Nucleic Acids Res.">
        <title>Genome sequences of Chlamydia trachomatis MoPn and Chlamydia pneumoniae AR39.</title>
        <authorList>
            <person name="Read T.D."/>
            <person name="Brunham R.C."/>
            <person name="Shen C."/>
            <person name="Gill S.R."/>
            <person name="Heidelberg J.F."/>
            <person name="White O."/>
            <person name="Hickey E.K."/>
            <person name="Peterson J.D."/>
            <person name="Utterback T.R."/>
            <person name="Berry K.J."/>
            <person name="Bass S."/>
            <person name="Linher K.D."/>
            <person name="Weidman J.F."/>
            <person name="Khouri H.M."/>
            <person name="Craven B."/>
            <person name="Bowman C."/>
            <person name="Dodson R.J."/>
            <person name="Gwinn M.L."/>
            <person name="Nelson W.C."/>
            <person name="DeBoy R.T."/>
            <person name="Kolonay J.F."/>
            <person name="McClarty G."/>
            <person name="Salzberg S.L."/>
            <person name="Eisen J.A."/>
            <person name="Fraser C.M."/>
        </authorList>
    </citation>
    <scope>NUCLEOTIDE SEQUENCE [LARGE SCALE GENOMIC DNA]</scope>
    <source>
        <strain>AR39</strain>
    </source>
</reference>
<reference key="3">
    <citation type="journal article" date="2000" name="Nucleic Acids Res.">
        <title>Comparison of whole genome sequences of Chlamydia pneumoniae J138 from Japan and CWL029 from USA.</title>
        <authorList>
            <person name="Shirai M."/>
            <person name="Hirakawa H."/>
            <person name="Kimoto M."/>
            <person name="Tabuchi M."/>
            <person name="Kishi F."/>
            <person name="Ouchi K."/>
            <person name="Shiba T."/>
            <person name="Ishii K."/>
            <person name="Hattori M."/>
            <person name="Kuhara S."/>
            <person name="Nakazawa T."/>
        </authorList>
    </citation>
    <scope>NUCLEOTIDE SEQUENCE [LARGE SCALE GENOMIC DNA]</scope>
    <source>
        <strain>J138</strain>
    </source>
</reference>
<reference key="4">
    <citation type="submission" date="2002-05" db="EMBL/GenBank/DDBJ databases">
        <title>The genome sequence of Chlamydia pneumoniae TW183 and comparison with other Chlamydia strains based on whole genome sequence analysis.</title>
        <authorList>
            <person name="Geng M.M."/>
            <person name="Schuhmacher A."/>
            <person name="Muehldorfer I."/>
            <person name="Bensch K.W."/>
            <person name="Schaefer K.P."/>
            <person name="Schneider S."/>
            <person name="Pohl T."/>
            <person name="Essig A."/>
            <person name="Marre R."/>
            <person name="Melchers K."/>
        </authorList>
    </citation>
    <scope>NUCLEOTIDE SEQUENCE [LARGE SCALE GENOMIC DNA]</scope>
    <source>
        <strain>TW-183</strain>
    </source>
</reference>
<organism>
    <name type="scientific">Chlamydia pneumoniae</name>
    <name type="common">Chlamydophila pneumoniae</name>
    <dbReference type="NCBI Taxonomy" id="83558"/>
    <lineage>
        <taxon>Bacteria</taxon>
        <taxon>Pseudomonadati</taxon>
        <taxon>Chlamydiota</taxon>
        <taxon>Chlamydiia</taxon>
        <taxon>Chlamydiales</taxon>
        <taxon>Chlamydiaceae</taxon>
        <taxon>Chlamydia/Chlamydophila group</taxon>
        <taxon>Chlamydia</taxon>
    </lineage>
</organism>
<dbReference type="EC" id="3.1.11.5" evidence="1"/>
<dbReference type="EC" id="5.6.2.4" evidence="1"/>
<dbReference type="EMBL" id="AE001363">
    <property type="protein sequence ID" value="AAD18877.1"/>
    <property type="molecule type" value="Genomic_DNA"/>
</dbReference>
<dbReference type="EMBL" id="AE002161">
    <property type="protein sequence ID" value="AAF37903.1"/>
    <property type="molecule type" value="Genomic_DNA"/>
</dbReference>
<dbReference type="EMBL" id="BA000008">
    <property type="protein sequence ID" value="BAA98945.1"/>
    <property type="molecule type" value="Genomic_DNA"/>
</dbReference>
<dbReference type="EMBL" id="AE009440">
    <property type="protein sequence ID" value="AAP98695.1"/>
    <property type="molecule type" value="Genomic_DNA"/>
</dbReference>
<dbReference type="PIR" id="C81624">
    <property type="entry name" value="C81624"/>
</dbReference>
<dbReference type="PIR" id="G86582">
    <property type="entry name" value="G86582"/>
</dbReference>
<dbReference type="PIR" id="H72041">
    <property type="entry name" value="H72041"/>
</dbReference>
<dbReference type="RefSeq" id="NP_224934.1">
    <property type="nucleotide sequence ID" value="NC_000922.1"/>
</dbReference>
<dbReference type="RefSeq" id="WP_010883376.1">
    <property type="nucleotide sequence ID" value="NZ_LN847257.1"/>
</dbReference>
<dbReference type="RefSeq" id="WP_010895365.1">
    <property type="nucleotide sequence ID" value="NZ_LN846995.1"/>
</dbReference>
<dbReference type="SMR" id="Q9Z7G7"/>
<dbReference type="STRING" id="406984.CPK_ORF00145"/>
<dbReference type="GeneID" id="45050793"/>
<dbReference type="KEGG" id="cpa:CP_0007"/>
<dbReference type="KEGG" id="cpj:recB"/>
<dbReference type="KEGG" id="cpn:CPn_0738"/>
<dbReference type="KEGG" id="cpt:CpB0767"/>
<dbReference type="PATRIC" id="fig|115713.3.peg.814"/>
<dbReference type="eggNOG" id="COG1074">
    <property type="taxonomic scope" value="Bacteria"/>
</dbReference>
<dbReference type="HOGENOM" id="CLU_001114_6_3_0"/>
<dbReference type="OrthoDB" id="9810135at2"/>
<dbReference type="Proteomes" id="UP000000583">
    <property type="component" value="Chromosome"/>
</dbReference>
<dbReference type="Proteomes" id="UP000000801">
    <property type="component" value="Chromosome"/>
</dbReference>
<dbReference type="GO" id="GO:0005829">
    <property type="term" value="C:cytosol"/>
    <property type="evidence" value="ECO:0007669"/>
    <property type="project" value="TreeGrafter"/>
</dbReference>
<dbReference type="GO" id="GO:0009338">
    <property type="term" value="C:exodeoxyribonuclease V complex"/>
    <property type="evidence" value="ECO:0007669"/>
    <property type="project" value="TreeGrafter"/>
</dbReference>
<dbReference type="GO" id="GO:0043138">
    <property type="term" value="F:3'-5' DNA helicase activity"/>
    <property type="evidence" value="ECO:0007669"/>
    <property type="project" value="UniProtKB-UniRule"/>
</dbReference>
<dbReference type="GO" id="GO:0005524">
    <property type="term" value="F:ATP binding"/>
    <property type="evidence" value="ECO:0007669"/>
    <property type="project" value="UniProtKB-UniRule"/>
</dbReference>
<dbReference type="GO" id="GO:0016887">
    <property type="term" value="F:ATP hydrolysis activity"/>
    <property type="evidence" value="ECO:0007669"/>
    <property type="project" value="RHEA"/>
</dbReference>
<dbReference type="GO" id="GO:0003677">
    <property type="term" value="F:DNA binding"/>
    <property type="evidence" value="ECO:0007669"/>
    <property type="project" value="UniProtKB-UniRule"/>
</dbReference>
<dbReference type="GO" id="GO:0008854">
    <property type="term" value="F:exodeoxyribonuclease V activity"/>
    <property type="evidence" value="ECO:0007669"/>
    <property type="project" value="UniProtKB-EC"/>
</dbReference>
<dbReference type="GO" id="GO:0000287">
    <property type="term" value="F:magnesium ion binding"/>
    <property type="evidence" value="ECO:0007669"/>
    <property type="project" value="UniProtKB-UniRule"/>
</dbReference>
<dbReference type="GO" id="GO:0000724">
    <property type="term" value="P:double-strand break repair via homologous recombination"/>
    <property type="evidence" value="ECO:0007669"/>
    <property type="project" value="UniProtKB-UniRule"/>
</dbReference>
<dbReference type="CDD" id="cd22352">
    <property type="entry name" value="RecB_C-like"/>
    <property type="match status" value="1"/>
</dbReference>
<dbReference type="Gene3D" id="3.90.320.10">
    <property type="match status" value="2"/>
</dbReference>
<dbReference type="Gene3D" id="3.40.50.300">
    <property type="entry name" value="P-loop containing nucleotide triphosphate hydrolases"/>
    <property type="match status" value="3"/>
</dbReference>
<dbReference type="Gene3D" id="1.10.486.10">
    <property type="entry name" value="PCRA, domain 4"/>
    <property type="match status" value="1"/>
</dbReference>
<dbReference type="Gene3D" id="1.10.3170.10">
    <property type="entry name" value="Recbcd, chain B, domain 2"/>
    <property type="match status" value="1"/>
</dbReference>
<dbReference type="HAMAP" id="MF_01485">
    <property type="entry name" value="RecB"/>
    <property type="match status" value="1"/>
</dbReference>
<dbReference type="InterPro" id="IPR014017">
    <property type="entry name" value="DNA_helicase_UvrD-like_C"/>
</dbReference>
<dbReference type="InterPro" id="IPR000212">
    <property type="entry name" value="DNA_helicase_UvrD/REP"/>
</dbReference>
<dbReference type="InterPro" id="IPR027417">
    <property type="entry name" value="P-loop_NTPase"/>
</dbReference>
<dbReference type="InterPro" id="IPR011604">
    <property type="entry name" value="PDDEXK-like_dom_sf"/>
</dbReference>
<dbReference type="InterPro" id="IPR004586">
    <property type="entry name" value="RecB"/>
</dbReference>
<dbReference type="InterPro" id="IPR011335">
    <property type="entry name" value="Restrct_endonuc-II-like"/>
</dbReference>
<dbReference type="InterPro" id="IPR014016">
    <property type="entry name" value="UvrD-like_ATP-bd"/>
</dbReference>
<dbReference type="NCBIfam" id="TIGR00609">
    <property type="entry name" value="recB"/>
    <property type="match status" value="1"/>
</dbReference>
<dbReference type="PANTHER" id="PTHR11070:SF23">
    <property type="entry name" value="RECBCD ENZYME SUBUNIT RECB"/>
    <property type="match status" value="1"/>
</dbReference>
<dbReference type="PANTHER" id="PTHR11070">
    <property type="entry name" value="UVRD / RECB / PCRA DNA HELICASE FAMILY MEMBER"/>
    <property type="match status" value="1"/>
</dbReference>
<dbReference type="Pfam" id="PF00580">
    <property type="entry name" value="UvrD-helicase"/>
    <property type="match status" value="1"/>
</dbReference>
<dbReference type="Pfam" id="PF13361">
    <property type="entry name" value="UvrD_C"/>
    <property type="match status" value="1"/>
</dbReference>
<dbReference type="SUPFAM" id="SSF52540">
    <property type="entry name" value="P-loop containing nucleoside triphosphate hydrolases"/>
    <property type="match status" value="1"/>
</dbReference>
<dbReference type="SUPFAM" id="SSF52980">
    <property type="entry name" value="Restriction endonuclease-like"/>
    <property type="match status" value="1"/>
</dbReference>
<dbReference type="PROSITE" id="PS51198">
    <property type="entry name" value="UVRD_HELICASE_ATP_BIND"/>
    <property type="match status" value="1"/>
</dbReference>
<dbReference type="PROSITE" id="PS51217">
    <property type="entry name" value="UVRD_HELICASE_CTER"/>
    <property type="match status" value="1"/>
</dbReference>
<accession>Q9Z7G7</accession>
<accession>Q9JSB1</accession>
<accession>Q9K2F2</accession>
<keyword id="KW-0067">ATP-binding</keyword>
<keyword id="KW-0227">DNA damage</keyword>
<keyword id="KW-0234">DNA repair</keyword>
<keyword id="KW-0238">DNA-binding</keyword>
<keyword id="KW-0269">Exonuclease</keyword>
<keyword id="KW-0347">Helicase</keyword>
<keyword id="KW-0378">Hydrolase</keyword>
<keyword id="KW-0413">Isomerase</keyword>
<keyword id="KW-0460">Magnesium</keyword>
<keyword id="KW-0479">Metal-binding</keyword>
<keyword id="KW-0540">Nuclease</keyword>
<keyword id="KW-0547">Nucleotide-binding</keyword>
<name>RECB_CHLPN</name>
<proteinExistence type="inferred from homology"/>
<sequence>MKPFNIFDSNSSIQGKFFLEASAGTGKTFTIEQIVLRALIEGSLTHVEHALAITFTNASTNELKVRIKDNLAQTLRELKAVLNSQPASLPTYLDINCNVKQIYMQVRNALATLDQMSLFTIHGFCNFVLEQYFPKTRLIHKNPALTHSQLVLHHITNYLKQDLWKNVLFQEQFHLLAVRYNVTSKHTSSLVDKLLASYTQPISSYFSSRVERLEQISLWHQQIYNSLLEIPKQVFLDQLTAHISGFKKQPFSILDDLHHFVDLLYTSETHSSLFSFFKIAETFNFKHRLARYKPCAAFTVLENMSWVERTLEFCNLDRIFNTLLVDLQEYLKQNYTPWLSPDESVFALEKLLSSSEAQPVVQALREQYQLVLIDEFQDTDKQQWSIFSNLFISPKFTGSLFLIGDPKQSIYEWRSADLPTYLTAKSSFSEDKQLQLVNNYRSTPKLMEAINQIFGKISPFLEIPGYLPIEYHALNPQSSETFENPPHAPIHFFFYETIKDQALWIFSEALRLQKEQKIPLGNMVVLVSDSNQAFELISYATIPVSFSKNKSIFHLTETHILTTALLEAILHPENYEKISKILFSSLFGLSLDEVTTKKEDFTIYFQSLHSYISHHGLLATFYRVMTTQGNVLFSSPRGDLIFQEMEKLCGYLDTISSYPYHQLLHLKNFSETGRWEEELAISSYSEDLETLKITTIHSSKGLEYDIVFCPGIEKSKKNKSSSELLREMYVACTRAKKQLYLPISTQPPSLQRSSALTNYVKLEGTQSSAYDLAIHLHQEHPDLFSYSLPKDHGHATTVLNLPLLETFALKVTPPKTIFSFSSTKFLLDTHKDSQSIPYSKLPISKQQLPLGEKTGILIHKILESIQFSLLQDTEYLMSTIMRFIKHTHLEGFEETILKLLSKTFFSPLTFSSQTFSLSQVLPNKIFRETSFLFLENQELWQGVIDLFFEHEGKYYIIDWKTSFLGETNSDYSKSNLSIYIKQEKLDYQGRIYVKAVRKFLNQFEIDDDVELGVIFIRGIDTQGNGFFALNSSEDIPNFNPKAIQKCQAYH</sequence>
<gene>
    <name evidence="1" type="primary">recB</name>
    <name type="ordered locus">CPn_0738</name>
    <name type="ordered locus">CP_0007</name>
    <name type="ordered locus">CpB0767</name>
</gene>
<feature type="chain" id="PRO_0000102044" description="RecBCD enzyme subunit RecB">
    <location>
        <begin position="1"/>
        <end position="1050"/>
    </location>
</feature>
<feature type="domain" description="UvrD-like helicase ATP-binding" evidence="1">
    <location>
        <begin position="1"/>
        <end position="443"/>
    </location>
</feature>
<feature type="domain" description="UvrD-like helicase C-terminal" evidence="1">
    <location>
        <begin position="458"/>
        <end position="701"/>
    </location>
</feature>
<feature type="region of interest" description="DNA-binding and helicase activity, interacts with RecC" evidence="1">
    <location>
        <begin position="1"/>
        <end position="766"/>
    </location>
</feature>
<feature type="region of interest" description="Nuclease activity, interacts with RecD and RecA" evidence="1">
    <location>
        <begin position="814"/>
        <end position="1050"/>
    </location>
</feature>
<feature type="active site" description="For nuclease activity" evidence="1">
    <location>
        <position position="958"/>
    </location>
</feature>
<feature type="binding site" evidence="1">
    <location>
        <begin position="21"/>
        <end position="28"/>
    </location>
    <ligand>
        <name>ATP</name>
        <dbReference type="ChEBI" id="CHEBI:30616"/>
    </ligand>
</feature>
<feature type="binding site" evidence="1">
    <location>
        <position position="859"/>
    </location>
    <ligand>
        <name>Mg(2+)</name>
        <dbReference type="ChEBI" id="CHEBI:18420"/>
    </ligand>
</feature>
<feature type="binding site" evidence="1">
    <location>
        <position position="945"/>
    </location>
    <ligand>
        <name>Mg(2+)</name>
        <dbReference type="ChEBI" id="CHEBI:18420"/>
    </ligand>
</feature>
<feature type="binding site" evidence="1">
    <location>
        <position position="958"/>
    </location>
    <ligand>
        <name>Mg(2+)</name>
        <dbReference type="ChEBI" id="CHEBI:18420"/>
    </ligand>
</feature>
<feature type="sequence conflict" description="In Ref. 2; AAF37903." evidence="2" ref="2">
    <original>N</original>
    <variation>K</variation>
    <location>
        <position position="142"/>
    </location>
</feature>
<feature type="sequence conflict" description="In Ref. 1; AAD18877." evidence="2" ref="1">
    <original>V</original>
    <variation>I</variation>
    <location>
        <position position="182"/>
    </location>
</feature>
<comment type="function">
    <text evidence="1">A helicase/nuclease that prepares dsDNA breaks (DSB) for recombinational DNA repair. Binds to DSBs and unwinds DNA via a highly rapid and processive ATP-dependent bidirectional helicase activity. Unwinds dsDNA until it encounters a Chi (crossover hotspot instigator) sequence from the 3' direction. Cuts ssDNA a few nucleotides 3' to the Chi site. The properties and activities of the enzyme are changed at Chi. The Chi-altered holoenzyme produces a long 3'-ssDNA overhang and facilitates RecA-binding to the ssDNA for homologous DNA recombination and repair. Holoenzyme degrades any linearized DNA that is unable to undergo homologous recombination. In the holoenzyme this subunit contributes ATPase, 3'-5' helicase, exonuclease activity and loads RecA onto ssDNA.</text>
</comment>
<comment type="catalytic activity">
    <reaction evidence="1">
        <text>Exonucleolytic cleavage (in the presence of ATP) in either 5'- to 3'- or 3'- to 5'-direction to yield 5'-phosphooligonucleotides.</text>
        <dbReference type="EC" id="3.1.11.5"/>
    </reaction>
</comment>
<comment type="catalytic activity">
    <reaction evidence="1">
        <text>Couples ATP hydrolysis with the unwinding of duplex DNA by translocating in the 3'-5' direction.</text>
        <dbReference type="EC" id="5.6.2.4"/>
    </reaction>
</comment>
<comment type="catalytic activity">
    <reaction evidence="1">
        <text>ATP + H2O = ADP + phosphate + H(+)</text>
        <dbReference type="Rhea" id="RHEA:13065"/>
        <dbReference type="ChEBI" id="CHEBI:15377"/>
        <dbReference type="ChEBI" id="CHEBI:15378"/>
        <dbReference type="ChEBI" id="CHEBI:30616"/>
        <dbReference type="ChEBI" id="CHEBI:43474"/>
        <dbReference type="ChEBI" id="CHEBI:456216"/>
        <dbReference type="EC" id="5.6.2.4"/>
    </reaction>
</comment>
<comment type="cofactor">
    <cofactor evidence="1">
        <name>Mg(2+)</name>
        <dbReference type="ChEBI" id="CHEBI:18420"/>
    </cofactor>
    <text evidence="1">Binds 1 Mg(2+) ion per subunit.</text>
</comment>
<comment type="subunit">
    <text evidence="1">Heterotrimer of RecB, RecC and RecD. All subunits contribute to DNA-binding. Interacts with RecA.</text>
</comment>
<comment type="domain">
    <text evidence="1">The N-terminal DNA-binding domain is a ssDNA-dependent ATPase and has ATP-dependent 3'-5' helicase function. This domain interacts with RecC.</text>
</comment>
<comment type="domain">
    <text evidence="1">The C-terminal domain has nuclease activity and interacts with RecD. It interacts with RecA, facilitating its loading onto ssDNA.</text>
</comment>
<comment type="miscellaneous">
    <text evidence="1">In the RecBCD complex, RecB has a slow 3'-5' helicase, an exonuclease activity and loads RecA onto ssDNA, RecD has a fast 5'-3' helicase activity, while RecC stimulates the ATPase and processivity of the RecB helicase and contributes to recognition of the Chi site.</text>
</comment>
<comment type="similarity">
    <text evidence="1">Belongs to the helicase family. UvrD subfamily.</text>
</comment>